<gene>
    <name type="ordered locus">BCAH187_A0027</name>
</gene>
<keyword id="KW-0963">Cytoplasm</keyword>
<keyword id="KW-0238">DNA-binding</keyword>
<accession>B7HPT5</accession>
<comment type="function">
    <text evidence="1">Binds to DNA and alters its conformation. May be involved in regulation of gene expression, nucleoid organization and DNA protection.</text>
</comment>
<comment type="subunit">
    <text evidence="1">Homodimer.</text>
</comment>
<comment type="subcellular location">
    <subcellularLocation>
        <location evidence="1">Cytoplasm</location>
        <location evidence="1">Nucleoid</location>
    </subcellularLocation>
</comment>
<comment type="similarity">
    <text evidence="1">Belongs to the YbaB/EbfC family.</text>
</comment>
<proteinExistence type="inferred from homology"/>
<name>Y027_BACC7</name>
<organism>
    <name type="scientific">Bacillus cereus (strain AH187)</name>
    <dbReference type="NCBI Taxonomy" id="405534"/>
    <lineage>
        <taxon>Bacteria</taxon>
        <taxon>Bacillati</taxon>
        <taxon>Bacillota</taxon>
        <taxon>Bacilli</taxon>
        <taxon>Bacillales</taxon>
        <taxon>Bacillaceae</taxon>
        <taxon>Bacillus</taxon>
        <taxon>Bacillus cereus group</taxon>
    </lineage>
</organism>
<reference key="1">
    <citation type="submission" date="2008-10" db="EMBL/GenBank/DDBJ databases">
        <title>Genome sequence of Bacillus cereus AH187.</title>
        <authorList>
            <person name="Dodson R.J."/>
            <person name="Durkin A.S."/>
            <person name="Rosovitz M.J."/>
            <person name="Rasko D.A."/>
            <person name="Kolsto A.B."/>
            <person name="Okstad O.A."/>
            <person name="Ravel J."/>
            <person name="Sutton G."/>
        </authorList>
    </citation>
    <scope>NUCLEOTIDE SEQUENCE [LARGE SCALE GENOMIC DNA]</scope>
    <source>
        <strain>AH187</strain>
    </source>
</reference>
<dbReference type="EMBL" id="CP001177">
    <property type="protein sequence ID" value="ACJ80546.1"/>
    <property type="molecule type" value="Genomic_DNA"/>
</dbReference>
<dbReference type="SMR" id="B7HPT5"/>
<dbReference type="KEGG" id="bcr:BCAH187_A0027"/>
<dbReference type="HOGENOM" id="CLU_140930_1_0_9"/>
<dbReference type="Proteomes" id="UP000002214">
    <property type="component" value="Chromosome"/>
</dbReference>
<dbReference type="GO" id="GO:0043590">
    <property type="term" value="C:bacterial nucleoid"/>
    <property type="evidence" value="ECO:0007669"/>
    <property type="project" value="UniProtKB-UniRule"/>
</dbReference>
<dbReference type="GO" id="GO:0005829">
    <property type="term" value="C:cytosol"/>
    <property type="evidence" value="ECO:0007669"/>
    <property type="project" value="TreeGrafter"/>
</dbReference>
<dbReference type="GO" id="GO:0003677">
    <property type="term" value="F:DNA binding"/>
    <property type="evidence" value="ECO:0007669"/>
    <property type="project" value="UniProtKB-UniRule"/>
</dbReference>
<dbReference type="FunFam" id="3.30.1310.10:FF:000002">
    <property type="entry name" value="Nucleoid-associated protein IKC_06587"/>
    <property type="match status" value="1"/>
</dbReference>
<dbReference type="Gene3D" id="3.30.1310.10">
    <property type="entry name" value="Nucleoid-associated protein YbaB-like domain"/>
    <property type="match status" value="1"/>
</dbReference>
<dbReference type="HAMAP" id="MF_00274">
    <property type="entry name" value="DNA_YbaB_EbfC"/>
    <property type="match status" value="1"/>
</dbReference>
<dbReference type="InterPro" id="IPR036894">
    <property type="entry name" value="YbaB-like_sf"/>
</dbReference>
<dbReference type="InterPro" id="IPR004401">
    <property type="entry name" value="YbaB/EbfC"/>
</dbReference>
<dbReference type="NCBIfam" id="TIGR00103">
    <property type="entry name" value="DNA_YbaB_EbfC"/>
    <property type="match status" value="1"/>
</dbReference>
<dbReference type="PANTHER" id="PTHR33449">
    <property type="entry name" value="NUCLEOID-ASSOCIATED PROTEIN YBAB"/>
    <property type="match status" value="1"/>
</dbReference>
<dbReference type="PANTHER" id="PTHR33449:SF1">
    <property type="entry name" value="NUCLEOID-ASSOCIATED PROTEIN YBAB"/>
    <property type="match status" value="1"/>
</dbReference>
<dbReference type="Pfam" id="PF02575">
    <property type="entry name" value="YbaB_DNA_bd"/>
    <property type="match status" value="1"/>
</dbReference>
<dbReference type="PIRSF" id="PIRSF004555">
    <property type="entry name" value="UCP004555"/>
    <property type="match status" value="1"/>
</dbReference>
<dbReference type="SUPFAM" id="SSF82607">
    <property type="entry name" value="YbaB-like"/>
    <property type="match status" value="1"/>
</dbReference>
<feature type="chain" id="PRO_1000119312" description="Nucleoid-associated protein BCAH187_A0027">
    <location>
        <begin position="1"/>
        <end position="109"/>
    </location>
</feature>
<sequence length="109" mass="11863">MMRGGMGNMNNMMKQMQKMQKEMAKAQEELGEKTVEGTAGGGMITVIANGHKQILEVKVKEEVVDPEDIEMLQDLVLAATNDALKKADELSNSTMGKFTKGLNLPGGMF</sequence>
<evidence type="ECO:0000255" key="1">
    <source>
        <dbReference type="HAMAP-Rule" id="MF_00274"/>
    </source>
</evidence>
<protein>
    <recommendedName>
        <fullName evidence="1">Nucleoid-associated protein BCAH187_A0027</fullName>
    </recommendedName>
</protein>